<sequence>MWKCSTVINKNKLIKAEYHTFYTLLFAMAVNAVHLESDAFLVCMNHALSTEKEEVMGLCIGEVDTNRIVHIHSVIILRRSDKRKDRVEISPEQLSAASTEAERLAEMTGRPMRVVGWYHSHPHITVWPSHVDVRTQAMYQMMDQGFVGLIFSCFIEDKNTKTGRVLYTCFQSVQAQKGSEYERIEIPIHVVPHEAIGKVCLESAVELPRILCQEEQDTYRRIHSLTHLDPITKIHNGSVFTKNLCSQMSAISGPLLQWLEDRLEQNKQSIITLQKEKELLTQELAAL</sequence>
<dbReference type="EC" id="3.4.19.-" evidence="4 7"/>
<dbReference type="EMBL" id="CU539056">
    <property type="status" value="NOT_ANNOTATED_CDS"/>
    <property type="molecule type" value="Genomic_DNA"/>
</dbReference>
<dbReference type="EMBL" id="CU855912">
    <property type="status" value="NOT_ANNOTATED_CDS"/>
    <property type="molecule type" value="Genomic_DNA"/>
</dbReference>
<dbReference type="RefSeq" id="NP_001410780.1">
    <property type="nucleotide sequence ID" value="NM_001423851.1"/>
</dbReference>
<dbReference type="RefSeq" id="XP_009293985.1">
    <property type="nucleotide sequence ID" value="XM_009295710.2"/>
</dbReference>
<dbReference type="RefSeq" id="XP_068071866.1">
    <property type="nucleotide sequence ID" value="XM_068215765.1"/>
</dbReference>
<dbReference type="PDB" id="5CW6">
    <property type="method" value="X-ray"/>
    <property type="resolution" value="3.19 A"/>
    <property type="chains" value="A=27-287"/>
</dbReference>
<dbReference type="PDBsum" id="5CW6"/>
<dbReference type="SMR" id="A0A8M3B525"/>
<dbReference type="FunCoup" id="A0A8M3B525">
    <property type="interactions" value="747"/>
</dbReference>
<dbReference type="GeneID" id="100333845"/>
<dbReference type="AGR" id="ZFIN:ZDB-GENE-100215-1"/>
<dbReference type="ZFIN" id="ZDB-GENE-100215-1">
    <property type="gene designation" value="brcc3"/>
</dbReference>
<dbReference type="OrthoDB" id="446074at2759"/>
<dbReference type="EvolutionaryTrace" id="A0A8M3B525"/>
<dbReference type="PRO" id="PR:A0A8M3B525"/>
<dbReference type="Proteomes" id="UP000000437">
    <property type="component" value="Chromosome 21"/>
</dbReference>
<dbReference type="GO" id="GO:0070531">
    <property type="term" value="C:BRCA1-A complex"/>
    <property type="evidence" value="ECO:0000318"/>
    <property type="project" value="GO_Central"/>
</dbReference>
<dbReference type="GO" id="GO:0070552">
    <property type="term" value="C:BRISC complex"/>
    <property type="evidence" value="ECO:0000318"/>
    <property type="project" value="GO_Central"/>
</dbReference>
<dbReference type="GO" id="GO:0005737">
    <property type="term" value="C:cytoplasm"/>
    <property type="evidence" value="ECO:0007669"/>
    <property type="project" value="UniProtKB-SubCell"/>
</dbReference>
<dbReference type="GO" id="GO:0000922">
    <property type="term" value="C:spindle pole"/>
    <property type="evidence" value="ECO:0007669"/>
    <property type="project" value="UniProtKB-SubCell"/>
</dbReference>
<dbReference type="GO" id="GO:0004843">
    <property type="term" value="F:cysteine-type deubiquitinase activity"/>
    <property type="evidence" value="ECO:0007669"/>
    <property type="project" value="InterPro"/>
</dbReference>
<dbReference type="GO" id="GO:0046872">
    <property type="term" value="F:metal ion binding"/>
    <property type="evidence" value="ECO:0007669"/>
    <property type="project" value="UniProtKB-KW"/>
</dbReference>
<dbReference type="GO" id="GO:0008237">
    <property type="term" value="F:metallopeptidase activity"/>
    <property type="evidence" value="ECO:0000318"/>
    <property type="project" value="GO_Central"/>
</dbReference>
<dbReference type="GO" id="GO:0031593">
    <property type="term" value="F:polyubiquitin modification-dependent protein binding"/>
    <property type="evidence" value="ECO:0000318"/>
    <property type="project" value="GO_Central"/>
</dbReference>
<dbReference type="GO" id="GO:0001525">
    <property type="term" value="P:angiogenesis"/>
    <property type="evidence" value="ECO:0000315"/>
    <property type="project" value="ZFIN"/>
</dbReference>
<dbReference type="GO" id="GO:0051301">
    <property type="term" value="P:cell division"/>
    <property type="evidence" value="ECO:0007669"/>
    <property type="project" value="UniProtKB-KW"/>
</dbReference>
<dbReference type="GO" id="GO:0006302">
    <property type="term" value="P:double-strand break repair"/>
    <property type="evidence" value="ECO:0000318"/>
    <property type="project" value="GO_Central"/>
</dbReference>
<dbReference type="GO" id="GO:0070536">
    <property type="term" value="P:protein K63-linked deubiquitination"/>
    <property type="evidence" value="ECO:0007669"/>
    <property type="project" value="InterPro"/>
</dbReference>
<dbReference type="GO" id="GO:0006508">
    <property type="term" value="P:proteolysis"/>
    <property type="evidence" value="ECO:0007669"/>
    <property type="project" value="UniProtKB-KW"/>
</dbReference>
<dbReference type="CDD" id="cd08068">
    <property type="entry name" value="MPN_BRCC36"/>
    <property type="match status" value="1"/>
</dbReference>
<dbReference type="FunFam" id="3.40.140.10:FF:000015">
    <property type="entry name" value="Lys-63-specific deubiquitinase BRCC36 isoform 3"/>
    <property type="match status" value="1"/>
</dbReference>
<dbReference type="Gene3D" id="3.40.140.10">
    <property type="entry name" value="Cytidine Deaminase, domain 2"/>
    <property type="match status" value="1"/>
</dbReference>
<dbReference type="InterPro" id="IPR040749">
    <property type="entry name" value="BRCC36_C"/>
</dbReference>
<dbReference type="InterPro" id="IPR000555">
    <property type="entry name" value="JAMM/MPN+_dom"/>
</dbReference>
<dbReference type="InterPro" id="IPR050242">
    <property type="entry name" value="JAMM_MPN+_peptidase_M67A"/>
</dbReference>
<dbReference type="InterPro" id="IPR037518">
    <property type="entry name" value="MPN"/>
</dbReference>
<dbReference type="InterPro" id="IPR033860">
    <property type="entry name" value="MPN_BRCC36"/>
</dbReference>
<dbReference type="PANTHER" id="PTHR10410">
    <property type="entry name" value="EUKARYOTIC TRANSLATION INITIATION FACTOR 3 -RELATED"/>
    <property type="match status" value="1"/>
</dbReference>
<dbReference type="Pfam" id="PF18110">
    <property type="entry name" value="BRCC36_C"/>
    <property type="match status" value="1"/>
</dbReference>
<dbReference type="Pfam" id="PF01398">
    <property type="entry name" value="JAB"/>
    <property type="match status" value="1"/>
</dbReference>
<dbReference type="SMART" id="SM00232">
    <property type="entry name" value="JAB_MPN"/>
    <property type="match status" value="1"/>
</dbReference>
<dbReference type="SUPFAM" id="SSF102712">
    <property type="entry name" value="JAB1/MPN domain"/>
    <property type="match status" value="1"/>
</dbReference>
<dbReference type="PROSITE" id="PS50249">
    <property type="entry name" value="MPN"/>
    <property type="match status" value="1"/>
</dbReference>
<feature type="chain" id="PRO_0000458257" description="Lys-63-specific deubiquitinase">
    <location>
        <begin position="1"/>
        <end position="287"/>
    </location>
</feature>
<feature type="domain" description="MPN" evidence="3">
    <location>
        <begin position="33"/>
        <end position="176"/>
    </location>
</feature>
<feature type="coiled-coil region" evidence="2">
    <location>
        <begin position="256"/>
        <end position="283"/>
    </location>
</feature>
<feature type="short sequence motif" description="JAMM motif" evidence="3">
    <location>
        <begin position="119"/>
        <end position="132"/>
    </location>
</feature>
<feature type="binding site" evidence="3 5 10">
    <location>
        <position position="119"/>
    </location>
    <ligand>
        <name>Zn(2+)</name>
        <dbReference type="ChEBI" id="CHEBI:29105"/>
        <note>catalytic</note>
    </ligand>
</feature>
<feature type="binding site" evidence="3 5 10">
    <location>
        <position position="121"/>
    </location>
    <ligand>
        <name>Zn(2+)</name>
        <dbReference type="ChEBI" id="CHEBI:29105"/>
        <note>catalytic</note>
    </ligand>
</feature>
<feature type="binding site" evidence="3 5 10">
    <location>
        <position position="132"/>
    </location>
    <ligand>
        <name>Zn(2+)</name>
        <dbReference type="ChEBI" id="CHEBI:29105"/>
        <note>catalytic</note>
    </ligand>
</feature>
<feature type="strand" evidence="11">
    <location>
        <begin position="31"/>
        <end position="35"/>
    </location>
</feature>
<feature type="helix" evidence="11">
    <location>
        <begin position="37"/>
        <end position="47"/>
    </location>
</feature>
<feature type="strand" evidence="11">
    <location>
        <begin position="56"/>
        <end position="63"/>
    </location>
</feature>
<feature type="strand" evidence="11">
    <location>
        <begin position="67"/>
        <end position="77"/>
    </location>
</feature>
<feature type="helix" evidence="11">
    <location>
        <begin position="91"/>
        <end position="108"/>
    </location>
</feature>
<feature type="strand" evidence="11">
    <location>
        <begin position="113"/>
        <end position="120"/>
    </location>
</feature>
<feature type="strand" evidence="11">
    <location>
        <begin position="122"/>
        <end position="124"/>
    </location>
</feature>
<feature type="helix" evidence="11">
    <location>
        <begin position="130"/>
        <end position="139"/>
    </location>
</feature>
<feature type="turn" evidence="11">
    <location>
        <begin position="140"/>
        <end position="142"/>
    </location>
</feature>
<feature type="strand" evidence="11">
    <location>
        <begin position="143"/>
        <end position="145"/>
    </location>
</feature>
<feature type="strand" evidence="11">
    <location>
        <begin position="147"/>
        <end position="152"/>
    </location>
</feature>
<feature type="strand" evidence="11">
    <location>
        <begin position="166"/>
        <end position="172"/>
    </location>
</feature>
<feature type="strand" evidence="11">
    <location>
        <begin position="183"/>
        <end position="186"/>
    </location>
</feature>
<feature type="strand" evidence="11">
    <location>
        <begin position="188"/>
        <end position="190"/>
    </location>
</feature>
<name>BRCC3_DANRE</name>
<accession>A0A8M3B525</accession>
<accession>A0A0M3KL72</accession>
<comment type="function">
    <text evidence="1 5">Metalloprotease that specifically cleaves 'Lys-63'-linked polyubiquitin chains, leaving the last ubiquitin chain attached to its substrates (By similarity). Catalytic subunit of the BRISC complex, a multiprotein complex that specifically cleaves 'Lys-63'-linked ubiquitin in various substrates; brcc3 does not have activity by itself, but needs to be associated into a higher-order assembly, for minimal in vitro activity (PubMed:26344097).</text>
</comment>
<comment type="cofactor">
    <cofactor evidence="4 5">
        <name>Zn(2+)</name>
        <dbReference type="ChEBI" id="CHEBI:29105"/>
    </cofactor>
    <text evidence="4 5">Binds 1 zinc ion per subunit.</text>
</comment>
<comment type="subunit">
    <text evidence="4 5">Monomer (PubMed:26344097). Homodimer (PubMed:26344097). Component of the BRISC complex, at least composed of abraxas2, brcc3, babam1 and babam2 (PubMed:26344097). Interacts with abraxas2; the interaction is direct and may form a heterotetramer (PubMed:26344097). Component of the BRCA1-A complex (By similarity). Both the BRCA1-A complex and the BRISC complex bind polyubiquitin (By similarity).</text>
</comment>
<comment type="subcellular location">
    <subcellularLocation>
        <location evidence="4">Nucleus</location>
    </subcellularLocation>
    <subcellularLocation>
        <location evidence="4">Cytoplasm</location>
    </subcellularLocation>
    <subcellularLocation>
        <location evidence="4">Cytoplasm</location>
        <location evidence="4">Cytoskeleton</location>
        <location evidence="4">Spindle pole</location>
    </subcellularLocation>
</comment>
<comment type="similarity">
    <text evidence="6">Belongs to the peptidase M67A family. BRCC36 subfamily.</text>
</comment>
<reference evidence="8" key="1">
    <citation type="journal article" date="2013" name="Nature">
        <title>The zebrafish reference genome sequence and its relationship to the human genome.</title>
        <authorList>
            <person name="Howe K."/>
            <person name="Clark M.D."/>
            <person name="Torroja C.F."/>
            <person name="Torrance J."/>
            <person name="Berthelot C."/>
            <person name="Muffato M."/>
            <person name="Collins J.E."/>
            <person name="Humphray S."/>
            <person name="McLaren K."/>
            <person name="Matthews L."/>
            <person name="McLaren S."/>
            <person name="Sealy I."/>
            <person name="Caccamo M."/>
            <person name="Churcher C."/>
            <person name="Scott C."/>
            <person name="Barrett J.C."/>
            <person name="Koch R."/>
            <person name="Rauch G.J."/>
            <person name="White S."/>
            <person name="Chow W."/>
            <person name="Kilian B."/>
            <person name="Quintais L.T."/>
            <person name="Guerra-Assuncao J.A."/>
            <person name="Zhou Y."/>
            <person name="Gu Y."/>
            <person name="Yen J."/>
            <person name="Vogel J.H."/>
            <person name="Eyre T."/>
            <person name="Redmond S."/>
            <person name="Banerjee R."/>
            <person name="Chi J."/>
            <person name="Fu B."/>
            <person name="Langley E."/>
            <person name="Maguire S.F."/>
            <person name="Laird G.K."/>
            <person name="Lloyd D."/>
            <person name="Kenyon E."/>
            <person name="Donaldson S."/>
            <person name="Sehra H."/>
            <person name="Almeida-King J."/>
            <person name="Loveland J."/>
            <person name="Trevanion S."/>
            <person name="Jones M."/>
            <person name="Quail M."/>
            <person name="Willey D."/>
            <person name="Hunt A."/>
            <person name="Burton J."/>
            <person name="Sims S."/>
            <person name="McLay K."/>
            <person name="Plumb B."/>
            <person name="Davis J."/>
            <person name="Clee C."/>
            <person name="Oliver K."/>
            <person name="Clark R."/>
            <person name="Riddle C."/>
            <person name="Elliot D."/>
            <person name="Threadgold G."/>
            <person name="Harden G."/>
            <person name="Ware D."/>
            <person name="Begum S."/>
            <person name="Mortimore B."/>
            <person name="Kerry G."/>
            <person name="Heath P."/>
            <person name="Phillimore B."/>
            <person name="Tracey A."/>
            <person name="Corby N."/>
            <person name="Dunn M."/>
            <person name="Johnson C."/>
            <person name="Wood J."/>
            <person name="Clark S."/>
            <person name="Pelan S."/>
            <person name="Griffiths G."/>
            <person name="Smith M."/>
            <person name="Glithero R."/>
            <person name="Howden P."/>
            <person name="Barker N."/>
            <person name="Lloyd C."/>
            <person name="Stevens C."/>
            <person name="Harley J."/>
            <person name="Holt K."/>
            <person name="Panagiotidis G."/>
            <person name="Lovell J."/>
            <person name="Beasley H."/>
            <person name="Henderson C."/>
            <person name="Gordon D."/>
            <person name="Auger K."/>
            <person name="Wright D."/>
            <person name="Collins J."/>
            <person name="Raisen C."/>
            <person name="Dyer L."/>
            <person name="Leung K."/>
            <person name="Robertson L."/>
            <person name="Ambridge K."/>
            <person name="Leongamornlert D."/>
            <person name="McGuire S."/>
            <person name="Gilderthorp R."/>
            <person name="Griffiths C."/>
            <person name="Manthravadi D."/>
            <person name="Nichol S."/>
            <person name="Barker G."/>
            <person name="Whitehead S."/>
            <person name="Kay M."/>
            <person name="Brown J."/>
            <person name="Murnane C."/>
            <person name="Gray E."/>
            <person name="Humphries M."/>
            <person name="Sycamore N."/>
            <person name="Barker D."/>
            <person name="Saunders D."/>
            <person name="Wallis J."/>
            <person name="Babbage A."/>
            <person name="Hammond S."/>
            <person name="Mashreghi-Mohammadi M."/>
            <person name="Barr L."/>
            <person name="Martin S."/>
            <person name="Wray P."/>
            <person name="Ellington A."/>
            <person name="Matthews N."/>
            <person name="Ellwood M."/>
            <person name="Woodmansey R."/>
            <person name="Clark G."/>
            <person name="Cooper J."/>
            <person name="Tromans A."/>
            <person name="Grafham D."/>
            <person name="Skuce C."/>
            <person name="Pandian R."/>
            <person name="Andrews R."/>
            <person name="Harrison E."/>
            <person name="Kimberley A."/>
            <person name="Garnett J."/>
            <person name="Fosker N."/>
            <person name="Hall R."/>
            <person name="Garner P."/>
            <person name="Kelly D."/>
            <person name="Bird C."/>
            <person name="Palmer S."/>
            <person name="Gehring I."/>
            <person name="Berger A."/>
            <person name="Dooley C.M."/>
            <person name="Ersan-Urun Z."/>
            <person name="Eser C."/>
            <person name="Geiger H."/>
            <person name="Geisler M."/>
            <person name="Karotki L."/>
            <person name="Kirn A."/>
            <person name="Konantz J."/>
            <person name="Konantz M."/>
            <person name="Oberlander M."/>
            <person name="Rudolph-Geiger S."/>
            <person name="Teucke M."/>
            <person name="Lanz C."/>
            <person name="Raddatz G."/>
            <person name="Osoegawa K."/>
            <person name="Zhu B."/>
            <person name="Rapp A."/>
            <person name="Widaa S."/>
            <person name="Langford C."/>
            <person name="Yang F."/>
            <person name="Schuster S.C."/>
            <person name="Carter N.P."/>
            <person name="Harrow J."/>
            <person name="Ning Z."/>
            <person name="Herrero J."/>
            <person name="Searle S.M."/>
            <person name="Enright A."/>
            <person name="Geisler R."/>
            <person name="Plasterk R.H."/>
            <person name="Lee C."/>
            <person name="Westerfield M."/>
            <person name="de Jong P.J."/>
            <person name="Zon L.I."/>
            <person name="Postlethwait J.H."/>
            <person name="Nusslein-Volhard C."/>
            <person name="Hubbard T.J."/>
            <person name="Roest Crollius H."/>
            <person name="Rogers J."/>
            <person name="Stemple D.L."/>
        </authorList>
    </citation>
    <scope>NUCLEOTIDE SEQUENCE [LARGE SCALE GENOMIC DNA]</scope>
    <source>
        <strain evidence="8">Tuebingen</strain>
    </source>
</reference>
<reference evidence="10" key="2">
    <citation type="journal article" date="2015" name="Mol. Cell">
        <title>Higher-order assembly of BRCC36-KIAA0157 is required for DUB activity and biological function.</title>
        <authorList>
            <person name="Zeqiraj E."/>
            <person name="Tian L."/>
            <person name="Piggott C.A."/>
            <person name="Pillon M.C."/>
            <person name="Duffy N.M."/>
            <person name="Ceccarelli D.F."/>
            <person name="Keszei A.F."/>
            <person name="Lorenzen K."/>
            <person name="Kurinov I."/>
            <person name="Orlicky S."/>
            <person name="Gish G.D."/>
            <person name="Heck A.J."/>
            <person name="Guarne A."/>
            <person name="Greenberg R.A."/>
            <person name="Sicheri F."/>
        </authorList>
    </citation>
    <scope>X-RAY CRYSTALLOGRAPHY (3.19 ANGSTROMS) IN COMPLEX WITH ZINC</scope>
    <scope>NUCLEOTIDE SEQUENCE [MRNA] OF 27-287</scope>
    <scope>FUNCTION</scope>
    <scope>COFACTOR</scope>
    <scope>SUBUNIT</scope>
    <scope>IDENTIFICATION IN THE BRISC COMPLEX</scope>
    <scope>INTERACTION WITH ABRAXAS2</scope>
</reference>
<evidence type="ECO:0000250" key="1">
    <source>
        <dbReference type="UniProtKB" id="E2AXC7"/>
    </source>
</evidence>
<evidence type="ECO:0000255" key="2"/>
<evidence type="ECO:0000255" key="3">
    <source>
        <dbReference type="PROSITE-ProRule" id="PRU01182"/>
    </source>
</evidence>
<evidence type="ECO:0000255" key="4">
    <source>
        <dbReference type="RuleBase" id="RU367116"/>
    </source>
</evidence>
<evidence type="ECO:0000269" key="5">
    <source>
    </source>
</evidence>
<evidence type="ECO:0000305" key="6"/>
<evidence type="ECO:0000305" key="7">
    <source>
    </source>
</evidence>
<evidence type="ECO:0000312" key="8">
    <source>
        <dbReference type="Proteomes" id="UP000000437"/>
    </source>
</evidence>
<evidence type="ECO:0000312" key="9">
    <source>
        <dbReference type="RefSeq" id="XP_009293985.1"/>
    </source>
</evidence>
<evidence type="ECO:0007744" key="10">
    <source>
        <dbReference type="PDB" id="5CW6"/>
    </source>
</evidence>
<evidence type="ECO:0007829" key="11">
    <source>
        <dbReference type="PDB" id="5CW6"/>
    </source>
</evidence>
<proteinExistence type="evidence at protein level"/>
<gene>
    <name evidence="7 9" type="primary">brcc3</name>
</gene>
<keyword id="KW-0002">3D-structure</keyword>
<keyword id="KW-0131">Cell cycle</keyword>
<keyword id="KW-0132">Cell division</keyword>
<keyword id="KW-0175">Coiled coil</keyword>
<keyword id="KW-0963">Cytoplasm</keyword>
<keyword id="KW-0206">Cytoskeleton</keyword>
<keyword id="KW-0378">Hydrolase</keyword>
<keyword id="KW-0479">Metal-binding</keyword>
<keyword id="KW-0482">Metalloprotease</keyword>
<keyword id="KW-0498">Mitosis</keyword>
<keyword id="KW-0539">Nucleus</keyword>
<keyword id="KW-0645">Protease</keyword>
<keyword id="KW-1185">Reference proteome</keyword>
<keyword id="KW-0833">Ubl conjugation pathway</keyword>
<keyword id="KW-0862">Zinc</keyword>
<organism evidence="8">
    <name type="scientific">Danio rerio</name>
    <name type="common">Zebrafish</name>
    <name type="synonym">Brachydanio rerio</name>
    <dbReference type="NCBI Taxonomy" id="7955"/>
    <lineage>
        <taxon>Eukaryota</taxon>
        <taxon>Metazoa</taxon>
        <taxon>Chordata</taxon>
        <taxon>Craniata</taxon>
        <taxon>Vertebrata</taxon>
        <taxon>Euteleostomi</taxon>
        <taxon>Actinopterygii</taxon>
        <taxon>Neopterygii</taxon>
        <taxon>Teleostei</taxon>
        <taxon>Ostariophysi</taxon>
        <taxon>Cypriniformes</taxon>
        <taxon>Danionidae</taxon>
        <taxon>Danioninae</taxon>
        <taxon>Danio</taxon>
    </lineage>
</organism>
<protein>
    <recommendedName>
        <fullName evidence="4 7">Lys-63-specific deubiquitinase</fullName>
        <ecNumber evidence="4 7">3.4.19.-</ecNumber>
    </recommendedName>
</protein>